<proteinExistence type="inferred from homology"/>
<accession>A5GCS6</accession>
<keyword id="KW-0004">4Fe-4S</keyword>
<keyword id="KW-0963">Cytoplasm</keyword>
<keyword id="KW-0408">Iron</keyword>
<keyword id="KW-0411">Iron-sulfur</keyword>
<keyword id="KW-0479">Metal-binding</keyword>
<keyword id="KW-1185">Reference proteome</keyword>
<keyword id="KW-0949">S-adenosyl-L-methionine</keyword>
<keyword id="KW-0808">Transferase</keyword>
<gene>
    <name evidence="1" type="primary">lipA</name>
    <name type="ordered locus">Gura_0399</name>
</gene>
<name>LIPA_GEOUR</name>
<organism>
    <name type="scientific">Geotalea uraniireducens (strain Rf4)</name>
    <name type="common">Geobacter uraniireducens</name>
    <dbReference type="NCBI Taxonomy" id="351605"/>
    <lineage>
        <taxon>Bacteria</taxon>
        <taxon>Pseudomonadati</taxon>
        <taxon>Thermodesulfobacteriota</taxon>
        <taxon>Desulfuromonadia</taxon>
        <taxon>Geobacterales</taxon>
        <taxon>Geobacteraceae</taxon>
        <taxon>Geotalea</taxon>
    </lineage>
</organism>
<reference key="1">
    <citation type="submission" date="2007-05" db="EMBL/GenBank/DDBJ databases">
        <title>Complete sequence of Geobacter uraniireducens Rf4.</title>
        <authorList>
            <consortium name="US DOE Joint Genome Institute"/>
            <person name="Copeland A."/>
            <person name="Lucas S."/>
            <person name="Lapidus A."/>
            <person name="Barry K."/>
            <person name="Detter J.C."/>
            <person name="Glavina del Rio T."/>
            <person name="Hammon N."/>
            <person name="Israni S."/>
            <person name="Dalin E."/>
            <person name="Tice H."/>
            <person name="Pitluck S."/>
            <person name="Chertkov O."/>
            <person name="Brettin T."/>
            <person name="Bruce D."/>
            <person name="Han C."/>
            <person name="Schmutz J."/>
            <person name="Larimer F."/>
            <person name="Land M."/>
            <person name="Hauser L."/>
            <person name="Kyrpides N."/>
            <person name="Mikhailova N."/>
            <person name="Shelobolina E."/>
            <person name="Aklujkar M."/>
            <person name="Lovley D."/>
            <person name="Richardson P."/>
        </authorList>
    </citation>
    <scope>NUCLEOTIDE SEQUENCE [LARGE SCALE GENOMIC DNA]</scope>
    <source>
        <strain>ATCC BAA-1134 / JCM 13001 / Rf4</strain>
    </source>
</reference>
<evidence type="ECO:0000255" key="1">
    <source>
        <dbReference type="HAMAP-Rule" id="MF_00206"/>
    </source>
</evidence>
<evidence type="ECO:0000255" key="2">
    <source>
        <dbReference type="PROSITE-ProRule" id="PRU01266"/>
    </source>
</evidence>
<protein>
    <recommendedName>
        <fullName evidence="1">Lipoyl synthase</fullName>
        <ecNumber evidence="1">2.8.1.8</ecNumber>
    </recommendedName>
    <alternativeName>
        <fullName evidence="1">Lip-syn</fullName>
        <shortName evidence="1">LS</shortName>
    </alternativeName>
    <alternativeName>
        <fullName evidence="1">Lipoate synthase</fullName>
    </alternativeName>
    <alternativeName>
        <fullName evidence="1">Lipoic acid synthase</fullName>
    </alternativeName>
    <alternativeName>
        <fullName evidence="1">Sulfur insertion protein LipA</fullName>
    </alternativeName>
</protein>
<comment type="function">
    <text evidence="1">Catalyzes the radical-mediated insertion of two sulfur atoms into the C-6 and C-8 positions of the octanoyl moiety bound to the lipoyl domains of lipoate-dependent enzymes, thereby converting the octanoylated domains into lipoylated derivatives.</text>
</comment>
<comment type="catalytic activity">
    <reaction evidence="1">
        <text>[[Fe-S] cluster scaffold protein carrying a second [4Fe-4S](2+) cluster] + N(6)-octanoyl-L-lysyl-[protein] + 2 oxidized [2Fe-2S]-[ferredoxin] + 2 S-adenosyl-L-methionine + 4 H(+) = [[Fe-S] cluster scaffold protein] + N(6)-[(R)-dihydrolipoyl]-L-lysyl-[protein] + 4 Fe(3+) + 2 hydrogen sulfide + 2 5'-deoxyadenosine + 2 L-methionine + 2 reduced [2Fe-2S]-[ferredoxin]</text>
        <dbReference type="Rhea" id="RHEA:16585"/>
        <dbReference type="Rhea" id="RHEA-COMP:9928"/>
        <dbReference type="Rhea" id="RHEA-COMP:10000"/>
        <dbReference type="Rhea" id="RHEA-COMP:10001"/>
        <dbReference type="Rhea" id="RHEA-COMP:10475"/>
        <dbReference type="Rhea" id="RHEA-COMP:14568"/>
        <dbReference type="Rhea" id="RHEA-COMP:14569"/>
        <dbReference type="ChEBI" id="CHEBI:15378"/>
        <dbReference type="ChEBI" id="CHEBI:17319"/>
        <dbReference type="ChEBI" id="CHEBI:29034"/>
        <dbReference type="ChEBI" id="CHEBI:29919"/>
        <dbReference type="ChEBI" id="CHEBI:33722"/>
        <dbReference type="ChEBI" id="CHEBI:33737"/>
        <dbReference type="ChEBI" id="CHEBI:33738"/>
        <dbReference type="ChEBI" id="CHEBI:57844"/>
        <dbReference type="ChEBI" id="CHEBI:59789"/>
        <dbReference type="ChEBI" id="CHEBI:78809"/>
        <dbReference type="ChEBI" id="CHEBI:83100"/>
        <dbReference type="EC" id="2.8.1.8"/>
    </reaction>
</comment>
<comment type="cofactor">
    <cofactor evidence="1">
        <name>[4Fe-4S] cluster</name>
        <dbReference type="ChEBI" id="CHEBI:49883"/>
    </cofactor>
    <text evidence="1">Binds 2 [4Fe-4S] clusters per subunit. One cluster is coordinated with 3 cysteines and an exchangeable S-adenosyl-L-methionine.</text>
</comment>
<comment type="pathway">
    <text evidence="1">Protein modification; protein lipoylation via endogenous pathway; protein N(6)-(lipoyl)lysine from octanoyl-[acyl-carrier-protein]: step 2/2.</text>
</comment>
<comment type="subcellular location">
    <subcellularLocation>
        <location evidence="1">Cytoplasm</location>
    </subcellularLocation>
</comment>
<comment type="similarity">
    <text evidence="1">Belongs to the radical SAM superfamily. Lipoyl synthase family.</text>
</comment>
<feature type="chain" id="PRO_1000077958" description="Lipoyl synthase">
    <location>
        <begin position="1"/>
        <end position="283"/>
    </location>
</feature>
<feature type="domain" description="Radical SAM core" evidence="2">
    <location>
        <begin position="47"/>
        <end position="262"/>
    </location>
</feature>
<feature type="binding site" evidence="1">
    <location>
        <position position="35"/>
    </location>
    <ligand>
        <name>[4Fe-4S] cluster</name>
        <dbReference type="ChEBI" id="CHEBI:49883"/>
        <label>1</label>
    </ligand>
</feature>
<feature type="binding site" evidence="1">
    <location>
        <position position="40"/>
    </location>
    <ligand>
        <name>[4Fe-4S] cluster</name>
        <dbReference type="ChEBI" id="CHEBI:49883"/>
        <label>1</label>
    </ligand>
</feature>
<feature type="binding site" evidence="1">
    <location>
        <position position="46"/>
    </location>
    <ligand>
        <name>[4Fe-4S] cluster</name>
        <dbReference type="ChEBI" id="CHEBI:49883"/>
        <label>1</label>
    </ligand>
</feature>
<feature type="binding site" evidence="1">
    <location>
        <position position="61"/>
    </location>
    <ligand>
        <name>[4Fe-4S] cluster</name>
        <dbReference type="ChEBI" id="CHEBI:49883"/>
        <label>2</label>
        <note>4Fe-4S-S-AdoMet</note>
    </ligand>
</feature>
<feature type="binding site" evidence="1">
    <location>
        <position position="65"/>
    </location>
    <ligand>
        <name>[4Fe-4S] cluster</name>
        <dbReference type="ChEBI" id="CHEBI:49883"/>
        <label>2</label>
        <note>4Fe-4S-S-AdoMet</note>
    </ligand>
</feature>
<feature type="binding site" evidence="1">
    <location>
        <position position="68"/>
    </location>
    <ligand>
        <name>[4Fe-4S] cluster</name>
        <dbReference type="ChEBI" id="CHEBI:49883"/>
        <label>2</label>
        <note>4Fe-4S-S-AdoMet</note>
    </ligand>
</feature>
<feature type="binding site" evidence="1">
    <location>
        <position position="273"/>
    </location>
    <ligand>
        <name>[4Fe-4S] cluster</name>
        <dbReference type="ChEBI" id="CHEBI:49883"/>
        <label>1</label>
    </ligand>
</feature>
<dbReference type="EC" id="2.8.1.8" evidence="1"/>
<dbReference type="EMBL" id="CP000698">
    <property type="protein sequence ID" value="ABQ24615.1"/>
    <property type="molecule type" value="Genomic_DNA"/>
</dbReference>
<dbReference type="SMR" id="A5GCS6"/>
<dbReference type="STRING" id="351605.Gura_0399"/>
<dbReference type="KEGG" id="gur:Gura_0399"/>
<dbReference type="HOGENOM" id="CLU_033144_2_1_7"/>
<dbReference type="OrthoDB" id="9787898at2"/>
<dbReference type="UniPathway" id="UPA00538">
    <property type="reaction ID" value="UER00593"/>
</dbReference>
<dbReference type="Proteomes" id="UP000006695">
    <property type="component" value="Chromosome"/>
</dbReference>
<dbReference type="GO" id="GO:0005737">
    <property type="term" value="C:cytoplasm"/>
    <property type="evidence" value="ECO:0007669"/>
    <property type="project" value="UniProtKB-SubCell"/>
</dbReference>
<dbReference type="GO" id="GO:0051539">
    <property type="term" value="F:4 iron, 4 sulfur cluster binding"/>
    <property type="evidence" value="ECO:0007669"/>
    <property type="project" value="UniProtKB-UniRule"/>
</dbReference>
<dbReference type="GO" id="GO:0016992">
    <property type="term" value="F:lipoate synthase activity"/>
    <property type="evidence" value="ECO:0007669"/>
    <property type="project" value="UniProtKB-UniRule"/>
</dbReference>
<dbReference type="GO" id="GO:0046872">
    <property type="term" value="F:metal ion binding"/>
    <property type="evidence" value="ECO:0007669"/>
    <property type="project" value="UniProtKB-KW"/>
</dbReference>
<dbReference type="FunFam" id="3.20.20.70:FF:000186">
    <property type="entry name" value="Lipoyl synthase"/>
    <property type="match status" value="1"/>
</dbReference>
<dbReference type="Gene3D" id="3.20.20.70">
    <property type="entry name" value="Aldolase class I"/>
    <property type="match status" value="1"/>
</dbReference>
<dbReference type="HAMAP" id="MF_00206">
    <property type="entry name" value="Lipoyl_synth"/>
    <property type="match status" value="1"/>
</dbReference>
<dbReference type="InterPro" id="IPR013785">
    <property type="entry name" value="Aldolase_TIM"/>
</dbReference>
<dbReference type="InterPro" id="IPR006638">
    <property type="entry name" value="Elp3/MiaA/NifB-like_rSAM"/>
</dbReference>
<dbReference type="InterPro" id="IPR003698">
    <property type="entry name" value="Lipoyl_synth"/>
</dbReference>
<dbReference type="InterPro" id="IPR007197">
    <property type="entry name" value="rSAM"/>
</dbReference>
<dbReference type="NCBIfam" id="TIGR00510">
    <property type="entry name" value="lipA"/>
    <property type="match status" value="1"/>
</dbReference>
<dbReference type="NCBIfam" id="NF004019">
    <property type="entry name" value="PRK05481.1"/>
    <property type="match status" value="1"/>
</dbReference>
<dbReference type="NCBIfam" id="NF009544">
    <property type="entry name" value="PRK12928.1"/>
    <property type="match status" value="1"/>
</dbReference>
<dbReference type="PANTHER" id="PTHR10949">
    <property type="entry name" value="LIPOYL SYNTHASE"/>
    <property type="match status" value="1"/>
</dbReference>
<dbReference type="PANTHER" id="PTHR10949:SF0">
    <property type="entry name" value="LIPOYL SYNTHASE, MITOCHONDRIAL"/>
    <property type="match status" value="1"/>
</dbReference>
<dbReference type="Pfam" id="PF04055">
    <property type="entry name" value="Radical_SAM"/>
    <property type="match status" value="1"/>
</dbReference>
<dbReference type="PIRSF" id="PIRSF005963">
    <property type="entry name" value="Lipoyl_synth"/>
    <property type="match status" value="1"/>
</dbReference>
<dbReference type="SFLD" id="SFLDF00271">
    <property type="entry name" value="lipoyl_synthase"/>
    <property type="match status" value="1"/>
</dbReference>
<dbReference type="SFLD" id="SFLDG01058">
    <property type="entry name" value="lipoyl_synthase_like"/>
    <property type="match status" value="1"/>
</dbReference>
<dbReference type="SMART" id="SM00729">
    <property type="entry name" value="Elp3"/>
    <property type="match status" value="1"/>
</dbReference>
<dbReference type="SUPFAM" id="SSF102114">
    <property type="entry name" value="Radical SAM enzymes"/>
    <property type="match status" value="1"/>
</dbReference>
<dbReference type="PROSITE" id="PS51918">
    <property type="entry name" value="RADICAL_SAM"/>
    <property type="match status" value="1"/>
</dbReference>
<sequence length="283" mass="31376">MKITRRPEWLQKKISPSAHAEMERLLGDLQLHTVCQEAHCPNISECFRSRQATFLILGNICTRLCSFCNVTKQSPHHFDPDEPARVAAAVQKLQLSHVVITSPTRDDLPDGGAGLYAQTVTAIRKAAPQTAIELLIPDFMGDHGSIAAVVAACPDISGHNLETVPRLYHIRSGADYRRSLDVLKIIHDLDPRLLTKSGLMLGLGETEVEIFQVLDDLLAVGCSYLSLGQYLAPSRSHYPVQGYVPPEIFDNYRERALAMGFKHVESGPYVRSSYHAEQYGMKG</sequence>